<reference key="1">
    <citation type="journal article" date="2007" name="Nature">
        <title>Evolution of genes and genomes on the Drosophila phylogeny.</title>
        <authorList>
            <consortium name="Drosophila 12 genomes consortium"/>
        </authorList>
    </citation>
    <scope>NUCLEOTIDE SEQUENCE [LARGE SCALE GENOMIC DNA]</scope>
    <source>
        <strain>Tucson 15010-1051.87</strain>
    </source>
</reference>
<accession>B4LL39</accession>
<protein>
    <recommendedName>
        <fullName>Ubiquitin-fold modifier-conjugating enzyme 1</fullName>
    </recommendedName>
    <alternativeName>
        <fullName>Ufm1-conjugating enzyme 1</fullName>
    </alternativeName>
</protein>
<keyword id="KW-1185">Reference proteome</keyword>
<keyword id="KW-0833">Ubl conjugation pathway</keyword>
<comment type="function">
    <text evidence="1">E2-like enzyme which forms an intermediate with UFM1 via a thioester linkage.</text>
</comment>
<comment type="similarity">
    <text evidence="2">Belongs to the ubiquitin-conjugating enzyme family. UFC1 subfamily.</text>
</comment>
<dbReference type="EMBL" id="CH940648">
    <property type="protein sequence ID" value="EDW61846.1"/>
    <property type="molecule type" value="Genomic_DNA"/>
</dbReference>
<dbReference type="SMR" id="B4LL39"/>
<dbReference type="FunCoup" id="B4LL39">
    <property type="interactions" value="1514"/>
</dbReference>
<dbReference type="STRING" id="7244.B4LL39"/>
<dbReference type="EnsemblMetazoa" id="FBtr0236013">
    <property type="protein sequence ID" value="FBpp0234505"/>
    <property type="gene ID" value="FBgn0207229"/>
</dbReference>
<dbReference type="EnsemblMetazoa" id="XM_002050617.3">
    <property type="protein sequence ID" value="XP_002050653.1"/>
    <property type="gene ID" value="LOC6627276"/>
</dbReference>
<dbReference type="GeneID" id="6627276"/>
<dbReference type="KEGG" id="dvi:6627276"/>
<dbReference type="CTD" id="51506"/>
<dbReference type="eggNOG" id="KOG3357">
    <property type="taxonomic scope" value="Eukaryota"/>
</dbReference>
<dbReference type="HOGENOM" id="CLU_101170_0_0_1"/>
<dbReference type="InParanoid" id="B4LL39"/>
<dbReference type="OMA" id="LWQKNVP"/>
<dbReference type="OrthoDB" id="10256182at2759"/>
<dbReference type="PhylomeDB" id="B4LL39"/>
<dbReference type="Proteomes" id="UP000008792">
    <property type="component" value="Unassembled WGS sequence"/>
</dbReference>
<dbReference type="GO" id="GO:0005737">
    <property type="term" value="C:cytoplasm"/>
    <property type="evidence" value="ECO:0007669"/>
    <property type="project" value="TreeGrafter"/>
</dbReference>
<dbReference type="GO" id="GO:0061657">
    <property type="term" value="F:UFM1 conjugating enzyme activity"/>
    <property type="evidence" value="ECO:0007669"/>
    <property type="project" value="InterPro"/>
</dbReference>
<dbReference type="GO" id="GO:1990592">
    <property type="term" value="P:protein K69-linked ufmylation"/>
    <property type="evidence" value="ECO:0007669"/>
    <property type="project" value="TreeGrafter"/>
</dbReference>
<dbReference type="CDD" id="cd11686">
    <property type="entry name" value="UBCc_UFC1"/>
    <property type="match status" value="1"/>
</dbReference>
<dbReference type="FunFam" id="3.10.110.10:FF:000042">
    <property type="entry name" value="Ubiquitin-fold modifier-conjugating enzyme 1"/>
    <property type="match status" value="1"/>
</dbReference>
<dbReference type="Gene3D" id="3.10.110.10">
    <property type="entry name" value="Ubiquitin Conjugating Enzyme"/>
    <property type="match status" value="1"/>
</dbReference>
<dbReference type="InterPro" id="IPR016135">
    <property type="entry name" value="UBQ-conjugating_enzyme/RWD"/>
</dbReference>
<dbReference type="InterPro" id="IPR014806">
    <property type="entry name" value="Ufc1"/>
</dbReference>
<dbReference type="PANTHER" id="PTHR12921">
    <property type="entry name" value="UBIQUITIN-FOLD MODIFIER-CONJUGATING ENZYME 1"/>
    <property type="match status" value="1"/>
</dbReference>
<dbReference type="PANTHER" id="PTHR12921:SF0">
    <property type="entry name" value="UBIQUITIN-FOLD MODIFIER-CONJUGATING ENZYME 1"/>
    <property type="match status" value="1"/>
</dbReference>
<dbReference type="Pfam" id="PF08694">
    <property type="entry name" value="UFC1"/>
    <property type="match status" value="1"/>
</dbReference>
<dbReference type="PIRSF" id="PIRSF008716">
    <property type="entry name" value="DUF1782"/>
    <property type="match status" value="1"/>
</dbReference>
<dbReference type="SUPFAM" id="SSF54495">
    <property type="entry name" value="UBC-like"/>
    <property type="match status" value="1"/>
</dbReference>
<evidence type="ECO:0000250" key="1"/>
<evidence type="ECO:0000305" key="2"/>
<feature type="chain" id="PRO_0000391976" description="Ubiquitin-fold modifier-conjugating enzyme 1">
    <location>
        <begin position="1"/>
        <end position="165"/>
    </location>
</feature>
<feature type="active site" description="Glycyl thioester intermediate" evidence="1">
    <location>
        <position position="116"/>
    </location>
</feature>
<name>UFC1_DROVI</name>
<proteinExistence type="inferred from homology"/>
<gene>
    <name type="ORF">GJ20088</name>
</gene>
<sequence>MVDDSTRKTLSNIPLLQIRAGPREKDIWVQRLKEEYQALIKYVENNKQSGSDWFRLESNKEGTKWFGKCWYMHNLLKYEFDVEFDIPVTYPTTAPEIALPELDGKTAKMYRGGKICLTDHFKPLWARNVPKFGIAHAMALGLAPWLAVEIPDLIEKGVITYKDNC</sequence>
<organism>
    <name type="scientific">Drosophila virilis</name>
    <name type="common">Fruit fly</name>
    <dbReference type="NCBI Taxonomy" id="7244"/>
    <lineage>
        <taxon>Eukaryota</taxon>
        <taxon>Metazoa</taxon>
        <taxon>Ecdysozoa</taxon>
        <taxon>Arthropoda</taxon>
        <taxon>Hexapoda</taxon>
        <taxon>Insecta</taxon>
        <taxon>Pterygota</taxon>
        <taxon>Neoptera</taxon>
        <taxon>Endopterygota</taxon>
        <taxon>Diptera</taxon>
        <taxon>Brachycera</taxon>
        <taxon>Muscomorpha</taxon>
        <taxon>Ephydroidea</taxon>
        <taxon>Drosophilidae</taxon>
        <taxon>Drosophila</taxon>
    </lineage>
</organism>